<feature type="chain" id="PRO_0000343255" description="NAD(P)H-quinone oxidoreductase chain 4 2">
    <location>
        <begin position="1"/>
        <end position="534"/>
    </location>
</feature>
<feature type="transmembrane region" description="Helical" evidence="1">
    <location>
        <begin position="9"/>
        <end position="29"/>
    </location>
</feature>
<feature type="transmembrane region" description="Helical" evidence="1">
    <location>
        <begin position="51"/>
        <end position="71"/>
    </location>
</feature>
<feature type="transmembrane region" description="Helical" evidence="1">
    <location>
        <begin position="106"/>
        <end position="126"/>
    </location>
</feature>
<feature type="transmembrane region" description="Helical" evidence="1">
    <location>
        <begin position="130"/>
        <end position="150"/>
    </location>
</feature>
<feature type="transmembrane region" description="Helical" evidence="1">
    <location>
        <begin position="152"/>
        <end position="172"/>
    </location>
</feature>
<feature type="transmembrane region" description="Helical" evidence="1">
    <location>
        <begin position="184"/>
        <end position="204"/>
    </location>
</feature>
<feature type="transmembrane region" description="Helical" evidence="1">
    <location>
        <begin position="227"/>
        <end position="247"/>
    </location>
</feature>
<feature type="transmembrane region" description="Helical" evidence="1">
    <location>
        <begin position="258"/>
        <end position="278"/>
    </location>
</feature>
<feature type="transmembrane region" description="Helical" evidence="1">
    <location>
        <begin position="290"/>
        <end position="310"/>
    </location>
</feature>
<feature type="transmembrane region" description="Helical" evidence="1">
    <location>
        <begin position="326"/>
        <end position="346"/>
    </location>
</feature>
<feature type="transmembrane region" description="Helical" evidence="1">
    <location>
        <begin position="347"/>
        <end position="367"/>
    </location>
</feature>
<feature type="transmembrane region" description="Helical" evidence="1">
    <location>
        <begin position="399"/>
        <end position="419"/>
    </location>
</feature>
<feature type="transmembrane region" description="Helical" evidence="1">
    <location>
        <begin position="432"/>
        <end position="452"/>
    </location>
</feature>
<feature type="transmembrane region" description="Helical" evidence="1">
    <location>
        <begin position="479"/>
        <end position="499"/>
    </location>
</feature>
<organism>
    <name type="scientific">Synechococcus sp. (strain JA-2-3B'a(2-13))</name>
    <name type="common">Cyanobacteria bacterium Yellowstone B-Prime</name>
    <dbReference type="NCBI Taxonomy" id="321332"/>
    <lineage>
        <taxon>Bacteria</taxon>
        <taxon>Bacillati</taxon>
        <taxon>Cyanobacteriota</taxon>
        <taxon>Cyanophyceae</taxon>
        <taxon>Synechococcales</taxon>
        <taxon>Synechococcaceae</taxon>
        <taxon>Synechococcus</taxon>
    </lineage>
</organism>
<accession>Q2JK43</accession>
<comment type="function">
    <text evidence="1">NDH-1 shuttles electrons from NAD(P)H, via FMN and iron-sulfur (Fe-S) centers, to quinones in the respiratory chain. The immediate electron acceptor for the enzyme in this species is believed to be plastoquinone. Couples the redox reaction to proton translocation (for every two electrons transferred, four hydrogen ions are translocated across the cytoplasmic membrane), and thus conserves the redox energy in a proton gradient.</text>
</comment>
<comment type="catalytic activity">
    <reaction evidence="1">
        <text>a plastoquinone + NADH + (n+1) H(+)(in) = a plastoquinol + NAD(+) + n H(+)(out)</text>
        <dbReference type="Rhea" id="RHEA:42608"/>
        <dbReference type="Rhea" id="RHEA-COMP:9561"/>
        <dbReference type="Rhea" id="RHEA-COMP:9562"/>
        <dbReference type="ChEBI" id="CHEBI:15378"/>
        <dbReference type="ChEBI" id="CHEBI:17757"/>
        <dbReference type="ChEBI" id="CHEBI:57540"/>
        <dbReference type="ChEBI" id="CHEBI:57945"/>
        <dbReference type="ChEBI" id="CHEBI:62192"/>
    </reaction>
</comment>
<comment type="catalytic activity">
    <reaction evidence="1">
        <text>a plastoquinone + NADPH + (n+1) H(+)(in) = a plastoquinol + NADP(+) + n H(+)(out)</text>
        <dbReference type="Rhea" id="RHEA:42612"/>
        <dbReference type="Rhea" id="RHEA-COMP:9561"/>
        <dbReference type="Rhea" id="RHEA-COMP:9562"/>
        <dbReference type="ChEBI" id="CHEBI:15378"/>
        <dbReference type="ChEBI" id="CHEBI:17757"/>
        <dbReference type="ChEBI" id="CHEBI:57783"/>
        <dbReference type="ChEBI" id="CHEBI:58349"/>
        <dbReference type="ChEBI" id="CHEBI:62192"/>
    </reaction>
</comment>
<comment type="subcellular location">
    <subcellularLocation>
        <location evidence="1">Cellular thylakoid membrane</location>
        <topology evidence="1">Multi-pass membrane protein</topology>
    </subcellularLocation>
</comment>
<comment type="similarity">
    <text evidence="1">Belongs to the complex I subunit 4 family.</text>
</comment>
<proteinExistence type="inferred from homology"/>
<dbReference type="EC" id="7.1.1.-" evidence="1"/>
<dbReference type="EMBL" id="CP000240">
    <property type="protein sequence ID" value="ABD02952.1"/>
    <property type="molecule type" value="Genomic_DNA"/>
</dbReference>
<dbReference type="RefSeq" id="WP_011433591.1">
    <property type="nucleotide sequence ID" value="NC_007776.1"/>
</dbReference>
<dbReference type="SMR" id="Q2JK43"/>
<dbReference type="STRING" id="321332.CYB_2004"/>
<dbReference type="KEGG" id="cyb:CYB_2004"/>
<dbReference type="eggNOG" id="COG1008">
    <property type="taxonomic scope" value="Bacteria"/>
</dbReference>
<dbReference type="HOGENOM" id="CLU_007100_4_0_3"/>
<dbReference type="Proteomes" id="UP000001938">
    <property type="component" value="Chromosome"/>
</dbReference>
<dbReference type="GO" id="GO:0031676">
    <property type="term" value="C:plasma membrane-derived thylakoid membrane"/>
    <property type="evidence" value="ECO:0007669"/>
    <property type="project" value="UniProtKB-SubCell"/>
</dbReference>
<dbReference type="GO" id="GO:0008137">
    <property type="term" value="F:NADH dehydrogenase (ubiquinone) activity"/>
    <property type="evidence" value="ECO:0007669"/>
    <property type="project" value="InterPro"/>
</dbReference>
<dbReference type="GO" id="GO:0048039">
    <property type="term" value="F:ubiquinone binding"/>
    <property type="evidence" value="ECO:0007669"/>
    <property type="project" value="TreeGrafter"/>
</dbReference>
<dbReference type="GO" id="GO:0042773">
    <property type="term" value="P:ATP synthesis coupled electron transport"/>
    <property type="evidence" value="ECO:0007669"/>
    <property type="project" value="InterPro"/>
</dbReference>
<dbReference type="GO" id="GO:0015990">
    <property type="term" value="P:electron transport coupled proton transport"/>
    <property type="evidence" value="ECO:0007669"/>
    <property type="project" value="TreeGrafter"/>
</dbReference>
<dbReference type="HAMAP" id="MF_00491">
    <property type="entry name" value="NDH1_NuoM"/>
    <property type="match status" value="1"/>
</dbReference>
<dbReference type="InterPro" id="IPR022997">
    <property type="entry name" value="NADH_Q_OxRdtase_chain4"/>
</dbReference>
<dbReference type="InterPro" id="IPR010227">
    <property type="entry name" value="NADH_Q_OxRdtase_chainM/4"/>
</dbReference>
<dbReference type="InterPro" id="IPR003918">
    <property type="entry name" value="NADH_UbQ_OxRdtase"/>
</dbReference>
<dbReference type="InterPro" id="IPR001750">
    <property type="entry name" value="ND/Mrp_TM"/>
</dbReference>
<dbReference type="NCBIfam" id="TIGR01972">
    <property type="entry name" value="NDH_I_M"/>
    <property type="match status" value="1"/>
</dbReference>
<dbReference type="NCBIfam" id="NF002713">
    <property type="entry name" value="PRK02546.1"/>
    <property type="match status" value="1"/>
</dbReference>
<dbReference type="NCBIfam" id="NF009212">
    <property type="entry name" value="PRK12561.1"/>
    <property type="match status" value="1"/>
</dbReference>
<dbReference type="PANTHER" id="PTHR43507:SF21">
    <property type="entry name" value="NAD(P)H-QUINONE OXIDOREDUCTASE CHAIN 4, CHLOROPLASTIC"/>
    <property type="match status" value="1"/>
</dbReference>
<dbReference type="PANTHER" id="PTHR43507">
    <property type="entry name" value="NADH-UBIQUINONE OXIDOREDUCTASE CHAIN 4"/>
    <property type="match status" value="1"/>
</dbReference>
<dbReference type="Pfam" id="PF00361">
    <property type="entry name" value="Proton_antipo_M"/>
    <property type="match status" value="1"/>
</dbReference>
<dbReference type="PRINTS" id="PR01437">
    <property type="entry name" value="NUOXDRDTASE4"/>
</dbReference>
<sequence length="534" mass="58434">MALPSLHEFPWLTTVIAYPVLAALFIPLIPAPAGDPSTRAYAQKLAERIRWFALFIAVTDLLILLAGFYVGYDPGQTGLQLLERYTWVPQVGLSWSVGADGLSMPLILLTAFITTLAILAAWPVTLKPRLFYFLMLAMYGGQIGVFAVQDMLLFFLMWELELIPVYLLLSIWGGANRLYAATKFILYTALSSLFILVAGLAMAFYGDPISFDMTDLAHKTYPLTFQLLMYGAFLIAYGVKLPIFPLHTWLPDAHGEATAPVHMLLAGILLKMGGYALMRMNAGMLPDAHLYFAPVLIVLGVVNIIFAALTSFAQRNLKRKIACSSISHMGFVLIGIGSLTEIGMSGAMLQMISHGLIGASLFFLVGATYDRTHTLELEEMGGVGLKMPKIFSMFTACSLASLALPGMSGFVAEIMVFIGMATTDAYSLPFRLVVVFLAAVGVILTPIYLLSMLRQIFFGPENKELTEHEELVDAEPREVFIIACLLIPIIGIGLYPKLVTSLYDQSTNALVALLRQELPQTGETVAQAPALYNN</sequence>
<reference key="1">
    <citation type="journal article" date="2007" name="ISME J.">
        <title>Population level functional diversity in a microbial community revealed by comparative genomic and metagenomic analyses.</title>
        <authorList>
            <person name="Bhaya D."/>
            <person name="Grossman A.R."/>
            <person name="Steunou A.-S."/>
            <person name="Khuri N."/>
            <person name="Cohan F.M."/>
            <person name="Hamamura N."/>
            <person name="Melendrez M.C."/>
            <person name="Bateson M.M."/>
            <person name="Ward D.M."/>
            <person name="Heidelberg J.F."/>
        </authorList>
    </citation>
    <scope>NUCLEOTIDE SEQUENCE [LARGE SCALE GENOMIC DNA]</scope>
    <source>
        <strain>JA-2-3B'a(2-13)</strain>
    </source>
</reference>
<gene>
    <name evidence="1" type="primary">ndhD2</name>
    <name type="ordered locus">CYB_2004</name>
</gene>
<protein>
    <recommendedName>
        <fullName evidence="1">NAD(P)H-quinone oxidoreductase chain 4 2</fullName>
        <ecNumber evidence="1">7.1.1.-</ecNumber>
    </recommendedName>
    <alternativeName>
        <fullName evidence="1">NAD(P)H dehydrogenase I, chain 4 2</fullName>
    </alternativeName>
    <alternativeName>
        <fullName evidence="1">NDH-1, chain 4 2</fullName>
    </alternativeName>
</protein>
<keyword id="KW-0472">Membrane</keyword>
<keyword id="KW-0520">NAD</keyword>
<keyword id="KW-0521">NADP</keyword>
<keyword id="KW-0618">Plastoquinone</keyword>
<keyword id="KW-0874">Quinone</keyword>
<keyword id="KW-1185">Reference proteome</keyword>
<keyword id="KW-0793">Thylakoid</keyword>
<keyword id="KW-1278">Translocase</keyword>
<keyword id="KW-0812">Transmembrane</keyword>
<keyword id="KW-1133">Transmembrane helix</keyword>
<name>NU4C2_SYNJB</name>
<evidence type="ECO:0000255" key="1">
    <source>
        <dbReference type="HAMAP-Rule" id="MF_00491"/>
    </source>
</evidence>